<name>RLR71_PLAVT</name>
<organism>
    <name type="scientific">Plasmopara viticola</name>
    <name type="common">Downy mildew of grapevine</name>
    <name type="synonym">Botrytis viticola</name>
    <dbReference type="NCBI Taxonomy" id="143451"/>
    <lineage>
        <taxon>Eukaryota</taxon>
        <taxon>Sar</taxon>
        <taxon>Stramenopiles</taxon>
        <taxon>Oomycota</taxon>
        <taxon>Peronosporales</taxon>
        <taxon>Peronosporaceae</taxon>
        <taxon>Plasmopara</taxon>
    </lineage>
</organism>
<reference key="1">
    <citation type="journal article" date="2018" name="Front. Plant Sci.">
        <title>In planta functional analysis and subcellular localization of the oomycete pathogen Plasmopara viticola candidate RXLR effector repertoire.</title>
        <authorList>
            <person name="Liu Y."/>
            <person name="Lan X."/>
            <person name="Song S."/>
            <person name="Yin L."/>
            <person name="Dry I.B."/>
            <person name="Qu J."/>
            <person name="Xiang J."/>
            <person name="Lu J."/>
        </authorList>
    </citation>
    <scope>NUCLEOTIDE SEQUENCE [MRNA]</scope>
    <scope>DOMAIN</scope>
    <scope>FUNCTION</scope>
    <scope>SUBCELLULAR LOCATION</scope>
</reference>
<keyword id="KW-0325">Glycoprotein</keyword>
<keyword id="KW-0964">Secreted</keyword>
<keyword id="KW-0732">Signal</keyword>
<keyword id="KW-0843">Virulence</keyword>
<proteinExistence type="evidence at transcript level"/>
<dbReference type="GlyCosmos" id="P0CV22">
    <property type="glycosylation" value="1 site, No reported glycans"/>
</dbReference>
<dbReference type="GO" id="GO:0005576">
    <property type="term" value="C:extracellular region"/>
    <property type="evidence" value="ECO:0007669"/>
    <property type="project" value="UniProtKB-SubCell"/>
</dbReference>
<dbReference type="GO" id="GO:0043657">
    <property type="term" value="C:host cell"/>
    <property type="evidence" value="ECO:0007669"/>
    <property type="project" value="UniProtKB-SubCell"/>
</dbReference>
<comment type="function">
    <text evidence="4">Secreted effector that partially suppresses the host cell death induced by cell death-inducing proteins.</text>
</comment>
<comment type="subcellular location">
    <subcellularLocation>
        <location evidence="4">Secreted</location>
    </subcellularLocation>
    <subcellularLocation>
        <location evidence="7">Host cell</location>
    </subcellularLocation>
</comment>
<comment type="domain">
    <text evidence="7">Has the canonical translocation RxLR motif, but lacks the canonical EER motif, which characterizes most oomycete effectors identified so far.</text>
</comment>
<comment type="similarity">
    <text evidence="6">Belongs to the RxLR effector family.</text>
</comment>
<sequence>MRPTGWRWPVLSLLLVLLPFQAAGPPRPRAAWTRIVSFLTCALTALAASWMTATRTLSNEITHCLTLTRLFRRYTIVNSWLLDRSLREAVLPSKTVTRMAIDQLWWPRKYTSTNGTIWCWGGGPSGISCRWIRINTCASCRTADPSGNARVYTVARPQPPTCCSNGRPRPLFRTFRYRTLPYLINPKRANNGAGPRQRFRNVYPPRLATVSLGRDGNGPVRGISSSPTRLTRPRMGGNTLRVSRTFGPVPCIVPEAKPWTPRVKRRCPLGATSRRLRPQARRGNVCACVVENGYGTAGYVPAAARCRLVRPPVRSTTRFST</sequence>
<feature type="signal peptide" evidence="1">
    <location>
        <begin position="1"/>
        <end position="23"/>
    </location>
</feature>
<feature type="chain" id="PRO_0000447931" description="Secreted RxLR effector protein 71">
    <location>
        <begin position="24"/>
        <end position="321"/>
    </location>
</feature>
<feature type="region of interest" description="Disordered" evidence="3">
    <location>
        <begin position="210"/>
        <end position="237"/>
    </location>
</feature>
<feature type="short sequence motif" description="RxLR" evidence="7">
    <location>
        <begin position="84"/>
        <end position="87"/>
    </location>
</feature>
<feature type="glycosylation site" description="N-linked (GlcNAc...) asparagine" evidence="2">
    <location>
        <position position="114"/>
    </location>
</feature>
<evidence type="ECO:0000255" key="1"/>
<evidence type="ECO:0000255" key="2">
    <source>
        <dbReference type="PROSITE-ProRule" id="PRU00498"/>
    </source>
</evidence>
<evidence type="ECO:0000256" key="3">
    <source>
        <dbReference type="SAM" id="MobiDB-lite"/>
    </source>
</evidence>
<evidence type="ECO:0000269" key="4">
    <source>
    </source>
</evidence>
<evidence type="ECO:0000303" key="5">
    <source>
    </source>
</evidence>
<evidence type="ECO:0000305" key="6"/>
<evidence type="ECO:0000305" key="7">
    <source>
    </source>
</evidence>
<gene>
    <name evidence="5" type="primary">RXLR71</name>
</gene>
<protein>
    <recommendedName>
        <fullName evidence="5">Secreted RxLR effector protein 71</fullName>
    </recommendedName>
</protein>
<accession>P0CV22</accession>